<reference key="1">
    <citation type="submission" date="2008-02" db="EMBL/GenBank/DDBJ databases">
        <title>Complete sequence of Yersinia pseudotuberculosis YPIII.</title>
        <authorList>
            <consortium name="US DOE Joint Genome Institute"/>
            <person name="Copeland A."/>
            <person name="Lucas S."/>
            <person name="Lapidus A."/>
            <person name="Glavina del Rio T."/>
            <person name="Dalin E."/>
            <person name="Tice H."/>
            <person name="Bruce D."/>
            <person name="Goodwin L."/>
            <person name="Pitluck S."/>
            <person name="Munk A.C."/>
            <person name="Brettin T."/>
            <person name="Detter J.C."/>
            <person name="Han C."/>
            <person name="Tapia R."/>
            <person name="Schmutz J."/>
            <person name="Larimer F."/>
            <person name="Land M."/>
            <person name="Hauser L."/>
            <person name="Challacombe J.F."/>
            <person name="Green L."/>
            <person name="Lindler L.E."/>
            <person name="Nikolich M.P."/>
            <person name="Richardson P."/>
        </authorList>
    </citation>
    <scope>NUCLEOTIDE SEQUENCE [LARGE SCALE GENOMIC DNA]</scope>
    <source>
        <strain>YPIII</strain>
    </source>
</reference>
<feature type="chain" id="PRO_1000092664" description="Ribosomal RNA small subunit methyltransferase G">
    <location>
        <begin position="1"/>
        <end position="206"/>
    </location>
</feature>
<feature type="binding site" evidence="1">
    <location>
        <position position="73"/>
    </location>
    <ligand>
        <name>S-adenosyl-L-methionine</name>
        <dbReference type="ChEBI" id="CHEBI:59789"/>
    </ligand>
</feature>
<feature type="binding site" evidence="1">
    <location>
        <position position="78"/>
    </location>
    <ligand>
        <name>S-adenosyl-L-methionine</name>
        <dbReference type="ChEBI" id="CHEBI:59789"/>
    </ligand>
</feature>
<feature type="binding site" evidence="1">
    <location>
        <begin position="124"/>
        <end position="125"/>
    </location>
    <ligand>
        <name>S-adenosyl-L-methionine</name>
        <dbReference type="ChEBI" id="CHEBI:59789"/>
    </ligand>
</feature>
<feature type="binding site" evidence="1">
    <location>
        <position position="139"/>
    </location>
    <ligand>
        <name>S-adenosyl-L-methionine</name>
        <dbReference type="ChEBI" id="CHEBI:59789"/>
    </ligand>
</feature>
<name>RSMG_YERPY</name>
<sequence length="206" mass="23113">MLKKLDSLLTVAGITLPDQQKHQLIGYVELLDKWNKAYNLTSVRDPQQMLVRHILDSIVVNPHLQGSRFIDVGTGPGLPGIPLAIVRPDAHFTLLDSLGKRVRFLRQVQHELGLNNIELVQSRVEAFTSEPPFDGVISRAFASLQDMLSWCHHLPAKPEGRFYALKGVRPDDELAVLPEDIVLESVIKLDVPELDGERHLIILKSN</sequence>
<gene>
    <name evidence="1" type="primary">rsmG</name>
    <name type="ordered locus">YPK_4218</name>
</gene>
<dbReference type="EC" id="2.1.1.170" evidence="1"/>
<dbReference type="EMBL" id="CP000950">
    <property type="protein sequence ID" value="ACA70474.1"/>
    <property type="molecule type" value="Genomic_DNA"/>
</dbReference>
<dbReference type="RefSeq" id="WP_012304786.1">
    <property type="nucleotide sequence ID" value="NZ_CP009792.1"/>
</dbReference>
<dbReference type="SMR" id="B1JR33"/>
<dbReference type="KEGG" id="ypy:YPK_4218"/>
<dbReference type="PATRIC" id="fig|502800.11.peg.568"/>
<dbReference type="GO" id="GO:0005829">
    <property type="term" value="C:cytosol"/>
    <property type="evidence" value="ECO:0007669"/>
    <property type="project" value="TreeGrafter"/>
</dbReference>
<dbReference type="GO" id="GO:0070043">
    <property type="term" value="F:rRNA (guanine-N7-)-methyltransferase activity"/>
    <property type="evidence" value="ECO:0007669"/>
    <property type="project" value="UniProtKB-UniRule"/>
</dbReference>
<dbReference type="CDD" id="cd02440">
    <property type="entry name" value="AdoMet_MTases"/>
    <property type="match status" value="1"/>
</dbReference>
<dbReference type="FunFam" id="3.40.50.150:FF:000032">
    <property type="entry name" value="Ribosomal RNA small subunit methyltransferase G"/>
    <property type="match status" value="1"/>
</dbReference>
<dbReference type="Gene3D" id="3.40.50.150">
    <property type="entry name" value="Vaccinia Virus protein VP39"/>
    <property type="match status" value="1"/>
</dbReference>
<dbReference type="HAMAP" id="MF_00074">
    <property type="entry name" value="16SrRNA_methyltr_G"/>
    <property type="match status" value="1"/>
</dbReference>
<dbReference type="InterPro" id="IPR003682">
    <property type="entry name" value="rRNA_ssu_MeTfrase_G"/>
</dbReference>
<dbReference type="InterPro" id="IPR029063">
    <property type="entry name" value="SAM-dependent_MTases_sf"/>
</dbReference>
<dbReference type="NCBIfam" id="TIGR00138">
    <property type="entry name" value="rsmG_gidB"/>
    <property type="match status" value="1"/>
</dbReference>
<dbReference type="PANTHER" id="PTHR31760">
    <property type="entry name" value="S-ADENOSYL-L-METHIONINE-DEPENDENT METHYLTRANSFERASES SUPERFAMILY PROTEIN"/>
    <property type="match status" value="1"/>
</dbReference>
<dbReference type="PANTHER" id="PTHR31760:SF0">
    <property type="entry name" value="S-ADENOSYL-L-METHIONINE-DEPENDENT METHYLTRANSFERASES SUPERFAMILY PROTEIN"/>
    <property type="match status" value="1"/>
</dbReference>
<dbReference type="Pfam" id="PF02527">
    <property type="entry name" value="GidB"/>
    <property type="match status" value="1"/>
</dbReference>
<dbReference type="PIRSF" id="PIRSF003078">
    <property type="entry name" value="GidB"/>
    <property type="match status" value="1"/>
</dbReference>
<dbReference type="SUPFAM" id="SSF53335">
    <property type="entry name" value="S-adenosyl-L-methionine-dependent methyltransferases"/>
    <property type="match status" value="1"/>
</dbReference>
<comment type="function">
    <text evidence="1">Specifically methylates the N7 position of guanine in position 527 of 16S rRNA.</text>
</comment>
<comment type="catalytic activity">
    <reaction evidence="1">
        <text>guanosine(527) in 16S rRNA + S-adenosyl-L-methionine = N(7)-methylguanosine(527) in 16S rRNA + S-adenosyl-L-homocysteine</text>
        <dbReference type="Rhea" id="RHEA:42732"/>
        <dbReference type="Rhea" id="RHEA-COMP:10209"/>
        <dbReference type="Rhea" id="RHEA-COMP:10210"/>
        <dbReference type="ChEBI" id="CHEBI:57856"/>
        <dbReference type="ChEBI" id="CHEBI:59789"/>
        <dbReference type="ChEBI" id="CHEBI:74269"/>
        <dbReference type="ChEBI" id="CHEBI:74480"/>
        <dbReference type="EC" id="2.1.1.170"/>
    </reaction>
</comment>
<comment type="subcellular location">
    <subcellularLocation>
        <location evidence="1">Cytoplasm</location>
    </subcellularLocation>
</comment>
<comment type="similarity">
    <text evidence="1">Belongs to the methyltransferase superfamily. RNA methyltransferase RsmG family.</text>
</comment>
<protein>
    <recommendedName>
        <fullName evidence="1">Ribosomal RNA small subunit methyltransferase G</fullName>
        <ecNumber evidence="1">2.1.1.170</ecNumber>
    </recommendedName>
    <alternativeName>
        <fullName evidence="1">16S rRNA 7-methylguanosine methyltransferase</fullName>
        <shortName evidence="1">16S rRNA m7G methyltransferase</shortName>
    </alternativeName>
</protein>
<organism>
    <name type="scientific">Yersinia pseudotuberculosis serotype O:3 (strain YPIII)</name>
    <dbReference type="NCBI Taxonomy" id="502800"/>
    <lineage>
        <taxon>Bacteria</taxon>
        <taxon>Pseudomonadati</taxon>
        <taxon>Pseudomonadota</taxon>
        <taxon>Gammaproteobacteria</taxon>
        <taxon>Enterobacterales</taxon>
        <taxon>Yersiniaceae</taxon>
        <taxon>Yersinia</taxon>
    </lineage>
</organism>
<proteinExistence type="inferred from homology"/>
<keyword id="KW-0963">Cytoplasm</keyword>
<keyword id="KW-0489">Methyltransferase</keyword>
<keyword id="KW-0698">rRNA processing</keyword>
<keyword id="KW-0949">S-adenosyl-L-methionine</keyword>
<keyword id="KW-0808">Transferase</keyword>
<accession>B1JR33</accession>
<evidence type="ECO:0000255" key="1">
    <source>
        <dbReference type="HAMAP-Rule" id="MF_00074"/>
    </source>
</evidence>